<organism>
    <name type="scientific">Sabellastarte magnifica</name>
    <name type="common">Feather duster</name>
    <dbReference type="NCBI Taxonomy" id="389514"/>
    <lineage>
        <taxon>Eukaryota</taxon>
        <taxon>Metazoa</taxon>
        <taxon>Spiralia</taxon>
        <taxon>Lophotrochozoa</taxon>
        <taxon>Annelida</taxon>
        <taxon>Polychaeta</taxon>
        <taxon>Sedentaria</taxon>
        <taxon>Canalipalpata</taxon>
        <taxon>Sabellida</taxon>
        <taxon>Sabellidae</taxon>
        <taxon>Sabellastarte</taxon>
    </lineage>
</organism>
<proteinExistence type="evidence at protein level"/>
<dbReference type="EMBL" id="AM283480">
    <property type="protein sequence ID" value="CAK55547.1"/>
    <property type="molecule type" value="Genomic_DNA"/>
</dbReference>
<dbReference type="PDB" id="4BD9">
    <property type="method" value="X-ray"/>
    <property type="resolution" value="2.20 A"/>
    <property type="chains" value="B=1-165"/>
</dbReference>
<dbReference type="PDBsum" id="4BD9"/>
<dbReference type="SMR" id="P84875"/>
<dbReference type="DIP" id="DIP-60557N"/>
<dbReference type="IntAct" id="P84875">
    <property type="interactions" value="3"/>
</dbReference>
<dbReference type="MEROPS" id="I02.064"/>
<dbReference type="EvolutionaryTrace" id="P84875"/>
<dbReference type="GO" id="GO:0005615">
    <property type="term" value="C:extracellular space"/>
    <property type="evidence" value="ECO:0007669"/>
    <property type="project" value="TreeGrafter"/>
</dbReference>
<dbReference type="GO" id="GO:0030414">
    <property type="term" value="F:peptidase inhibitor activity"/>
    <property type="evidence" value="ECO:0000314"/>
    <property type="project" value="UniProtKB"/>
</dbReference>
<dbReference type="GO" id="GO:0004867">
    <property type="term" value="F:serine-type endopeptidase inhibitor activity"/>
    <property type="evidence" value="ECO:0007669"/>
    <property type="project" value="UniProtKB-KW"/>
</dbReference>
<dbReference type="CDD" id="cd22601">
    <property type="entry name" value="Kunitz_SmCI_1-like"/>
    <property type="match status" value="1"/>
</dbReference>
<dbReference type="CDD" id="cd22602">
    <property type="entry name" value="Kunitz_SmCI_2-like"/>
    <property type="match status" value="1"/>
</dbReference>
<dbReference type="CDD" id="cd22603">
    <property type="entry name" value="Kunitz_SmCI_3-like"/>
    <property type="match status" value="1"/>
</dbReference>
<dbReference type="FunFam" id="4.10.410.10:FF:000021">
    <property type="entry name" value="Serine protease inhibitor, putative"/>
    <property type="match status" value="2"/>
</dbReference>
<dbReference type="FunFam" id="4.10.410.10:FF:000002">
    <property type="entry name" value="WAP, follistatin/kazal, immunoglobulin, kunitz and netrin domain-containing 2"/>
    <property type="match status" value="1"/>
</dbReference>
<dbReference type="Gene3D" id="4.10.410.10">
    <property type="entry name" value="Pancreatic trypsin inhibitor Kunitz domain"/>
    <property type="match status" value="3"/>
</dbReference>
<dbReference type="InterPro" id="IPR002223">
    <property type="entry name" value="Kunitz_BPTI"/>
</dbReference>
<dbReference type="InterPro" id="IPR036880">
    <property type="entry name" value="Kunitz_BPTI_sf"/>
</dbReference>
<dbReference type="InterPro" id="IPR020901">
    <property type="entry name" value="Prtase_inh_Kunz-CS"/>
</dbReference>
<dbReference type="InterPro" id="IPR008296">
    <property type="entry name" value="TFPI-like"/>
</dbReference>
<dbReference type="InterPro" id="IPR050098">
    <property type="entry name" value="TFPI/VKTCI-like"/>
</dbReference>
<dbReference type="PANTHER" id="PTHR10083:SF374">
    <property type="entry name" value="BPTI_KUNITZ INHIBITOR DOMAIN-CONTAINING PROTEIN"/>
    <property type="match status" value="1"/>
</dbReference>
<dbReference type="PANTHER" id="PTHR10083">
    <property type="entry name" value="KUNITZ-TYPE PROTEASE INHIBITOR-RELATED"/>
    <property type="match status" value="1"/>
</dbReference>
<dbReference type="Pfam" id="PF00014">
    <property type="entry name" value="Kunitz_BPTI"/>
    <property type="match status" value="3"/>
</dbReference>
<dbReference type="PIRSF" id="PIRSF001620">
    <property type="entry name" value="TFPI"/>
    <property type="match status" value="1"/>
</dbReference>
<dbReference type="PRINTS" id="PR00759">
    <property type="entry name" value="BASICPTASE"/>
</dbReference>
<dbReference type="SMART" id="SM00131">
    <property type="entry name" value="KU"/>
    <property type="match status" value="3"/>
</dbReference>
<dbReference type="SUPFAM" id="SSF57362">
    <property type="entry name" value="BPTI-like"/>
    <property type="match status" value="3"/>
</dbReference>
<dbReference type="PROSITE" id="PS00280">
    <property type="entry name" value="BPTI_KUNITZ_1"/>
    <property type="match status" value="3"/>
</dbReference>
<dbReference type="PROSITE" id="PS50279">
    <property type="entry name" value="BPTI_KUNITZ_2"/>
    <property type="match status" value="3"/>
</dbReference>
<reference evidence="4" key="1">
    <citation type="submission" date="2006-06" db="UniProtKB">
        <title>A novel bifunctional inhibitor of metallo carboxypeptidase and serine proteinase isolated from the annelid Sabellastarte magnifica. Isolation, characterization and cDNA cloning.</title>
        <authorList>
            <person name="Alonso del Rivero M."/>
            <person name="Trejo S."/>
            <person name="Rodriguez de la Vega M."/>
            <person name="Delfin J."/>
            <person name="Diaz J."/>
            <person name="Gonzalez Y."/>
            <person name="Canals F."/>
            <person name="Chavez M.A."/>
            <person name="Aviles F.X."/>
        </authorList>
    </citation>
    <scope>NUCLEOTIDE SEQUENCE [MRNA]</scope>
    <scope>PROTEIN SEQUENCE OF 1-22 AND 29-165</scope>
    <scope>FUNCTION</scope>
    <scope>MASS SPECTROMETRY</scope>
    <scope>GLYCOSYLATION AT ASN-23</scope>
    <scope>DISULFIDE BONDS</scope>
</reference>
<reference evidence="5" key="2">
    <citation type="journal article" date="2013" name="Structure">
        <title>A noncanonical mechanism of carboxypeptidase inhibition revealed by the crystal structure of the Tri-Kunitz SmCI in complex with human CPA4.</title>
        <authorList>
            <person name="Alonso del Rivero M."/>
            <person name="Reytor M.L."/>
            <person name="Trejo S.A."/>
            <person name="Chavez M.A."/>
            <person name="Aviles F.X."/>
            <person name="Reverter D."/>
        </authorList>
    </citation>
    <scope>X-RAY CRYSTALLOGRAPHY (2.20 ANGSTROMS) IN COMPLEX WITH HUMAN CPA4</scope>
    <scope>FUNCTION</scope>
    <scope>DISULFIDE BONDS</scope>
    <scope>MUTAGENESIS OF 1-ILE-SER-2</scope>
</reference>
<accession>P84875</accession>
<accession>A0PDV9</accession>
<keyword id="KW-0002">3D-structure</keyword>
<keyword id="KW-0903">Direct protein sequencing</keyword>
<keyword id="KW-1015">Disulfide bond</keyword>
<keyword id="KW-0325">Glycoprotein</keyword>
<keyword id="KW-0481">Metalloenzyme inhibitor</keyword>
<keyword id="KW-0483">Metalloprotease inhibitor</keyword>
<keyword id="KW-0646">Protease inhibitor</keyword>
<keyword id="KW-0677">Repeat</keyword>
<keyword id="KW-0722">Serine protease inhibitor</keyword>
<evidence type="ECO:0000255" key="1">
    <source>
        <dbReference type="PROSITE-ProRule" id="PRU00031"/>
    </source>
</evidence>
<evidence type="ECO:0000269" key="2">
    <source>
    </source>
</evidence>
<evidence type="ECO:0000269" key="3">
    <source ref="1"/>
</evidence>
<evidence type="ECO:0000305" key="4"/>
<evidence type="ECO:0007744" key="5">
    <source>
        <dbReference type="PDB" id="4BD9"/>
    </source>
</evidence>
<evidence type="ECO:0007829" key="6">
    <source>
        <dbReference type="PDB" id="4BD9"/>
    </source>
</evidence>
<name>PCPI_SABMA</name>
<protein>
    <recommendedName>
        <fullName>Carboxypeptidase inhibitor SmCI</fullName>
    </recommendedName>
</protein>
<comment type="function">
    <text evidence="2 3">Potent inhibitor of pancreatic carboxypeptidase A with a Ki of 27 nM, and of the serine proteases trypsin, chymotrypsin and pancreatic elastase, with Ki values of 6.9 nM, 1.83 nM and 4 nM, respectively (Ref.1). Also inhibits carboxypeptidase A4 CPA4 and CPA1 (PubMed:23746805). Does not inhibit cysteine and aspartic proteases (Ref.1).</text>
</comment>
<comment type="interaction">
    <interactant intactId="EBI-16060264">
        <id>P84875</id>
    </interactant>
    <interactant intactId="EBI-16060275">
        <id>Q9UI42-1</id>
        <label>CPA4</label>
    </interactant>
    <organismsDiffer>true</organismsDiffer>
    <experiments>3</experiments>
</comment>
<comment type="tissue specificity">
    <text evidence="3">Expressed in the tentacle crown. Not detected in annelid body.</text>
</comment>
<comment type="PTM">
    <text evidence="3">Contains 9 disulfide bonds.</text>
</comment>
<comment type="mass spectrometry" mass="19700.0" method="MALDI" evidence="3"/>
<sequence length="165" mass="18650">ISVCDLPADRGQCTAYIPQWFFNKTTEDCEKFVYGGCQGNANRFETKDDCIANCGCNLPSKVGPCRVSARMWFHNPETEKCEVFIYGGCHGNANRFATETECQEVCDRYQKPGFCYQPSETGPCKGSFPRYYYDYEDGECKEFIYGGCEGNANNFETKESCENAC</sequence>
<feature type="chain" id="PRO_0000271256" description="Carboxypeptidase inhibitor SmCI">
    <location>
        <begin position="1"/>
        <end position="165"/>
    </location>
</feature>
<feature type="domain" description="BPTI/Kunitz inhibitor 1" evidence="1">
    <location>
        <begin position="4"/>
        <end position="54"/>
    </location>
</feature>
<feature type="domain" description="BPTI/Kunitz inhibitor 2" evidence="1">
    <location>
        <begin position="56"/>
        <end position="106"/>
    </location>
</feature>
<feature type="domain" description="BPTI/Kunitz inhibitor 3" evidence="1">
    <location>
        <begin position="115"/>
        <end position="165"/>
    </location>
</feature>
<feature type="region of interest" description="Inserts into the active site groove of a carboxypeptidase and inhibits activity by emulating a C-terminal substrate" evidence="2">
    <location>
        <begin position="1"/>
        <end position="2"/>
    </location>
</feature>
<feature type="binding site" evidence="2 5">
    <location>
        <position position="1"/>
    </location>
    <ligand>
        <name>a protein</name>
        <dbReference type="ChEBI" id="CHEBI:16541"/>
    </ligand>
</feature>
<feature type="binding site" evidence="2 5">
    <location>
        <position position="2"/>
    </location>
    <ligand>
        <name>a protein</name>
        <dbReference type="ChEBI" id="CHEBI:16541"/>
    </ligand>
</feature>
<feature type="binding site" evidence="2 5">
    <location>
        <position position="109"/>
    </location>
    <ligand>
        <name>a protein</name>
        <dbReference type="ChEBI" id="CHEBI:16541"/>
    </ligand>
</feature>
<feature type="binding site" evidence="2 5">
    <location>
        <position position="110"/>
    </location>
    <ligand>
        <name>a protein</name>
        <dbReference type="ChEBI" id="CHEBI:16541"/>
    </ligand>
</feature>
<feature type="binding site" evidence="2 5">
    <location>
        <position position="111"/>
    </location>
    <ligand>
        <name>a protein</name>
        <dbReference type="ChEBI" id="CHEBI:16541"/>
    </ligand>
</feature>
<feature type="binding site" evidence="2 5">
    <location>
        <position position="113"/>
    </location>
    <ligand>
        <name>a protein</name>
        <dbReference type="ChEBI" id="CHEBI:16541"/>
    </ligand>
</feature>
<feature type="glycosylation site" description="N-linked (GlcNAc...) asparagine" evidence="3">
    <location>
        <position position="23"/>
    </location>
</feature>
<feature type="disulfide bond" evidence="1 2 5">
    <location>
        <begin position="4"/>
        <end position="54"/>
    </location>
</feature>
<feature type="disulfide bond" evidence="1 2 5">
    <location>
        <begin position="13"/>
        <end position="37"/>
    </location>
</feature>
<feature type="disulfide bond" evidence="1 2 5">
    <location>
        <begin position="29"/>
        <end position="50"/>
    </location>
</feature>
<feature type="disulfide bond" evidence="1 2 5">
    <location>
        <begin position="56"/>
        <end position="106"/>
    </location>
</feature>
<feature type="disulfide bond" evidence="1 2 5">
    <location>
        <begin position="65"/>
        <end position="89"/>
    </location>
</feature>
<feature type="disulfide bond" evidence="1 2 5">
    <location>
        <begin position="81"/>
        <end position="102"/>
    </location>
</feature>
<feature type="disulfide bond" evidence="1 2 5">
    <location>
        <begin position="115"/>
        <end position="165"/>
    </location>
</feature>
<feature type="disulfide bond" evidence="1 2 5">
    <location>
        <begin position="124"/>
        <end position="148"/>
    </location>
</feature>
<feature type="disulfide bond" evidence="1 2 5">
    <location>
        <begin position="140"/>
        <end position="161"/>
    </location>
</feature>
<feature type="mutagenesis site" description="Loss of inhibitory activity." evidence="2">
    <location>
        <begin position="1"/>
        <end position="2"/>
    </location>
</feature>
<feature type="helix" evidence="6">
    <location>
        <begin position="3"/>
        <end position="5"/>
    </location>
</feature>
<feature type="strand" evidence="6">
    <location>
        <begin position="17"/>
        <end position="23"/>
    </location>
</feature>
<feature type="turn" evidence="6">
    <location>
        <begin position="24"/>
        <end position="27"/>
    </location>
</feature>
<feature type="strand" evidence="6">
    <location>
        <begin position="28"/>
        <end position="34"/>
    </location>
</feature>
<feature type="strand" evidence="6">
    <location>
        <begin position="36"/>
        <end position="38"/>
    </location>
</feature>
<feature type="strand" evidence="6">
    <location>
        <begin position="44"/>
        <end position="46"/>
    </location>
</feature>
<feature type="helix" evidence="6">
    <location>
        <begin position="47"/>
        <end position="54"/>
    </location>
</feature>
<feature type="turn" evidence="6">
    <location>
        <begin position="55"/>
        <end position="57"/>
    </location>
</feature>
<feature type="strand" evidence="6">
    <location>
        <begin position="69"/>
        <end position="75"/>
    </location>
</feature>
<feature type="turn" evidence="6">
    <location>
        <begin position="76"/>
        <end position="79"/>
    </location>
</feature>
<feature type="strand" evidence="6">
    <location>
        <begin position="80"/>
        <end position="86"/>
    </location>
</feature>
<feature type="strand" evidence="6">
    <location>
        <begin position="88"/>
        <end position="90"/>
    </location>
</feature>
<feature type="strand" evidence="6">
    <location>
        <begin position="96"/>
        <end position="98"/>
    </location>
</feature>
<feature type="helix" evidence="6">
    <location>
        <begin position="99"/>
        <end position="106"/>
    </location>
</feature>
<feature type="turn" evidence="6">
    <location>
        <begin position="107"/>
        <end position="109"/>
    </location>
</feature>
<feature type="helix" evidence="6">
    <location>
        <begin position="113"/>
        <end position="116"/>
    </location>
</feature>
<feature type="strand" evidence="6">
    <location>
        <begin position="128"/>
        <end position="134"/>
    </location>
</feature>
<feature type="turn" evidence="6">
    <location>
        <begin position="135"/>
        <end position="138"/>
    </location>
</feature>
<feature type="strand" evidence="6">
    <location>
        <begin position="139"/>
        <end position="145"/>
    </location>
</feature>
<feature type="strand" evidence="6">
    <location>
        <begin position="147"/>
        <end position="149"/>
    </location>
</feature>
<feature type="strand" evidence="6">
    <location>
        <begin position="155"/>
        <end position="157"/>
    </location>
</feature>
<feature type="helix" evidence="6">
    <location>
        <begin position="158"/>
        <end position="164"/>
    </location>
</feature>